<keyword id="KW-0687">Ribonucleoprotein</keyword>
<keyword id="KW-0689">Ribosomal protein</keyword>
<keyword id="KW-0694">RNA-binding</keyword>
<keyword id="KW-0699">rRNA-binding</keyword>
<name>RS4_BORBZ</name>
<comment type="function">
    <text evidence="1">One of the primary rRNA binding proteins, it binds directly to 16S rRNA where it nucleates assembly of the body of the 30S subunit.</text>
</comment>
<comment type="function">
    <text evidence="1">With S5 and S12 plays an important role in translational accuracy.</text>
</comment>
<comment type="subunit">
    <text evidence="1">Part of the 30S ribosomal subunit. Contacts protein S5. The interaction surface between S4 and S5 is involved in control of translational fidelity.</text>
</comment>
<comment type="similarity">
    <text evidence="1">Belongs to the universal ribosomal protein uS4 family.</text>
</comment>
<gene>
    <name evidence="1" type="primary">rpsD</name>
    <name type="ordered locus">BbuZS7_0632</name>
</gene>
<accession>B7J2H5</accession>
<organism>
    <name type="scientific">Borreliella burgdorferi (strain ZS7)</name>
    <name type="common">Borrelia burgdorferi</name>
    <dbReference type="NCBI Taxonomy" id="445985"/>
    <lineage>
        <taxon>Bacteria</taxon>
        <taxon>Pseudomonadati</taxon>
        <taxon>Spirochaetota</taxon>
        <taxon>Spirochaetia</taxon>
        <taxon>Spirochaetales</taxon>
        <taxon>Borreliaceae</taxon>
        <taxon>Borreliella</taxon>
    </lineage>
</organism>
<evidence type="ECO:0000255" key="1">
    <source>
        <dbReference type="HAMAP-Rule" id="MF_01306"/>
    </source>
</evidence>
<evidence type="ECO:0000305" key="2"/>
<dbReference type="EMBL" id="CP001205">
    <property type="protein sequence ID" value="ACK75111.1"/>
    <property type="molecule type" value="Genomic_DNA"/>
</dbReference>
<dbReference type="RefSeq" id="WP_002557202.1">
    <property type="nucleotide sequence ID" value="NC_011728.1"/>
</dbReference>
<dbReference type="SMR" id="B7J2H5"/>
<dbReference type="KEGG" id="bbz:BbuZS7_0632"/>
<dbReference type="HOGENOM" id="CLU_092403_0_4_12"/>
<dbReference type="Proteomes" id="UP000006901">
    <property type="component" value="Chromosome"/>
</dbReference>
<dbReference type="GO" id="GO:0015935">
    <property type="term" value="C:small ribosomal subunit"/>
    <property type="evidence" value="ECO:0007669"/>
    <property type="project" value="InterPro"/>
</dbReference>
<dbReference type="GO" id="GO:0019843">
    <property type="term" value="F:rRNA binding"/>
    <property type="evidence" value="ECO:0007669"/>
    <property type="project" value="UniProtKB-UniRule"/>
</dbReference>
<dbReference type="GO" id="GO:0003735">
    <property type="term" value="F:structural constituent of ribosome"/>
    <property type="evidence" value="ECO:0007669"/>
    <property type="project" value="InterPro"/>
</dbReference>
<dbReference type="GO" id="GO:0042274">
    <property type="term" value="P:ribosomal small subunit biogenesis"/>
    <property type="evidence" value="ECO:0007669"/>
    <property type="project" value="TreeGrafter"/>
</dbReference>
<dbReference type="GO" id="GO:0006412">
    <property type="term" value="P:translation"/>
    <property type="evidence" value="ECO:0007669"/>
    <property type="project" value="UniProtKB-UniRule"/>
</dbReference>
<dbReference type="CDD" id="cd00165">
    <property type="entry name" value="S4"/>
    <property type="match status" value="1"/>
</dbReference>
<dbReference type="FunFam" id="3.10.290.10:FF:000001">
    <property type="entry name" value="30S ribosomal protein S4"/>
    <property type="match status" value="1"/>
</dbReference>
<dbReference type="Gene3D" id="1.10.1050.10">
    <property type="entry name" value="Ribosomal Protein S4 Delta 41, Chain A, domain 1"/>
    <property type="match status" value="1"/>
</dbReference>
<dbReference type="Gene3D" id="3.10.290.10">
    <property type="entry name" value="RNA-binding S4 domain"/>
    <property type="match status" value="1"/>
</dbReference>
<dbReference type="HAMAP" id="MF_01306_B">
    <property type="entry name" value="Ribosomal_uS4_B"/>
    <property type="match status" value="1"/>
</dbReference>
<dbReference type="InterPro" id="IPR022801">
    <property type="entry name" value="Ribosomal_uS4"/>
</dbReference>
<dbReference type="InterPro" id="IPR005709">
    <property type="entry name" value="Ribosomal_uS4_bac-type"/>
</dbReference>
<dbReference type="InterPro" id="IPR018079">
    <property type="entry name" value="Ribosomal_uS4_CS"/>
</dbReference>
<dbReference type="InterPro" id="IPR001912">
    <property type="entry name" value="Ribosomal_uS4_N"/>
</dbReference>
<dbReference type="InterPro" id="IPR002942">
    <property type="entry name" value="S4_RNA-bd"/>
</dbReference>
<dbReference type="InterPro" id="IPR036986">
    <property type="entry name" value="S4_RNA-bd_sf"/>
</dbReference>
<dbReference type="NCBIfam" id="NF003717">
    <property type="entry name" value="PRK05327.1"/>
    <property type="match status" value="1"/>
</dbReference>
<dbReference type="NCBIfam" id="TIGR01017">
    <property type="entry name" value="rpsD_bact"/>
    <property type="match status" value="1"/>
</dbReference>
<dbReference type="PANTHER" id="PTHR11831">
    <property type="entry name" value="30S 40S RIBOSOMAL PROTEIN"/>
    <property type="match status" value="1"/>
</dbReference>
<dbReference type="PANTHER" id="PTHR11831:SF4">
    <property type="entry name" value="SMALL RIBOSOMAL SUBUNIT PROTEIN US4M"/>
    <property type="match status" value="1"/>
</dbReference>
<dbReference type="Pfam" id="PF00163">
    <property type="entry name" value="Ribosomal_S4"/>
    <property type="match status" value="1"/>
</dbReference>
<dbReference type="Pfam" id="PF01479">
    <property type="entry name" value="S4"/>
    <property type="match status" value="1"/>
</dbReference>
<dbReference type="SMART" id="SM01390">
    <property type="entry name" value="Ribosomal_S4"/>
    <property type="match status" value="1"/>
</dbReference>
<dbReference type="SMART" id="SM00363">
    <property type="entry name" value="S4"/>
    <property type="match status" value="1"/>
</dbReference>
<dbReference type="SUPFAM" id="SSF55174">
    <property type="entry name" value="Alpha-L RNA-binding motif"/>
    <property type="match status" value="1"/>
</dbReference>
<dbReference type="PROSITE" id="PS00632">
    <property type="entry name" value="RIBOSOMAL_S4"/>
    <property type="match status" value="1"/>
</dbReference>
<dbReference type="PROSITE" id="PS50889">
    <property type="entry name" value="S4"/>
    <property type="match status" value="1"/>
</dbReference>
<reference key="1">
    <citation type="journal article" date="2011" name="J. Bacteriol.">
        <title>Whole-genome sequences of thirteen isolates of Borrelia burgdorferi.</title>
        <authorList>
            <person name="Schutzer S.E."/>
            <person name="Fraser-Liggett C.M."/>
            <person name="Casjens S.R."/>
            <person name="Qiu W.G."/>
            <person name="Dunn J.J."/>
            <person name="Mongodin E.F."/>
            <person name="Luft B.J."/>
        </authorList>
    </citation>
    <scope>NUCLEOTIDE SEQUENCE [LARGE SCALE GENOMIC DNA]</scope>
    <source>
        <strain>ZS7</strain>
    </source>
</reference>
<feature type="chain" id="PRO_1000140690" description="Small ribosomal subunit protein uS4">
    <location>
        <begin position="1"/>
        <end position="208"/>
    </location>
</feature>
<feature type="domain" description="S4 RNA-binding" evidence="1">
    <location>
        <begin position="95"/>
        <end position="157"/>
    </location>
</feature>
<proteinExistence type="inferred from homology"/>
<sequence>MNRKQIAKGKLVRRFGINIFEQPKYDKILKKKPHPPGMHGKARKAKITEYGKQLIEKQKIKFTYGVSERQLTNTFKEAKKHHGVTGDNLLSILERRIDNVVYRAGFAISRAHARQIVSHGIIILNGRRVTIPSIILRANDQIQIKEKDSLKKLIRSNIEKTSSLRNLPTWIEVNADDLNIKVKHAPSRDEIPTLANEQMVVEYYSKRA</sequence>
<protein>
    <recommendedName>
        <fullName evidence="1">Small ribosomal subunit protein uS4</fullName>
    </recommendedName>
    <alternativeName>
        <fullName evidence="2">30S ribosomal protein S4</fullName>
    </alternativeName>
</protein>